<protein>
    <recommendedName>
        <fullName>Swi5-dependent recombination DNA repair protein 1 homolog</fullName>
    </recommendedName>
    <alternativeName>
        <fullName>Meiosis protein 5 homolog</fullName>
    </alternativeName>
</protein>
<reference key="1">
    <citation type="journal article" date="2004" name="Nature">
        <title>Sequence and comparative analysis of the chicken genome provide unique perspectives on vertebrate evolution.</title>
        <authorList>
            <person name="Hillier L.W."/>
            <person name="Miller W."/>
            <person name="Birney E."/>
            <person name="Warren W."/>
            <person name="Hardison R.C."/>
            <person name="Ponting C.P."/>
            <person name="Bork P."/>
            <person name="Burt D.W."/>
            <person name="Groenen M.A.M."/>
            <person name="Delany M.E."/>
            <person name="Dodgson J.B."/>
            <person name="Chinwalla A.T."/>
            <person name="Cliften P.F."/>
            <person name="Clifton S.W."/>
            <person name="Delehaunty K.D."/>
            <person name="Fronick C."/>
            <person name="Fulton R.S."/>
            <person name="Graves T.A."/>
            <person name="Kremitzki C."/>
            <person name="Layman D."/>
            <person name="Magrini V."/>
            <person name="McPherson J.D."/>
            <person name="Miner T.L."/>
            <person name="Minx P."/>
            <person name="Nash W.E."/>
            <person name="Nhan M.N."/>
            <person name="Nelson J.O."/>
            <person name="Oddy L.G."/>
            <person name="Pohl C.S."/>
            <person name="Randall-Maher J."/>
            <person name="Smith S.M."/>
            <person name="Wallis J.W."/>
            <person name="Yang S.-P."/>
            <person name="Romanov M.N."/>
            <person name="Rondelli C.M."/>
            <person name="Paton B."/>
            <person name="Smith J."/>
            <person name="Morrice D."/>
            <person name="Daniels L."/>
            <person name="Tempest H.G."/>
            <person name="Robertson L."/>
            <person name="Masabanda J.S."/>
            <person name="Griffin D.K."/>
            <person name="Vignal A."/>
            <person name="Fillon V."/>
            <person name="Jacobbson L."/>
            <person name="Kerje S."/>
            <person name="Andersson L."/>
            <person name="Crooijmans R.P."/>
            <person name="Aerts J."/>
            <person name="van der Poel J.J."/>
            <person name="Ellegren H."/>
            <person name="Caldwell R.B."/>
            <person name="Hubbard S.J."/>
            <person name="Grafham D.V."/>
            <person name="Kierzek A.M."/>
            <person name="McLaren S.R."/>
            <person name="Overton I.M."/>
            <person name="Arakawa H."/>
            <person name="Beattie K.J."/>
            <person name="Bezzubov Y."/>
            <person name="Boardman P.E."/>
            <person name="Bonfield J.K."/>
            <person name="Croning M.D.R."/>
            <person name="Davies R.M."/>
            <person name="Francis M.D."/>
            <person name="Humphray S.J."/>
            <person name="Scott C.E."/>
            <person name="Taylor R.G."/>
            <person name="Tickle C."/>
            <person name="Brown W.R.A."/>
            <person name="Rogers J."/>
            <person name="Buerstedde J.-M."/>
            <person name="Wilson S.A."/>
            <person name="Stubbs L."/>
            <person name="Ovcharenko I."/>
            <person name="Gordon L."/>
            <person name="Lucas S."/>
            <person name="Miller M.M."/>
            <person name="Inoko H."/>
            <person name="Shiina T."/>
            <person name="Kaufman J."/>
            <person name="Salomonsen J."/>
            <person name="Skjoedt K."/>
            <person name="Wong G.K.-S."/>
            <person name="Wang J."/>
            <person name="Liu B."/>
            <person name="Wang J."/>
            <person name="Yu J."/>
            <person name="Yang H."/>
            <person name="Nefedov M."/>
            <person name="Koriabine M."/>
            <person name="Dejong P.J."/>
            <person name="Goodstadt L."/>
            <person name="Webber C."/>
            <person name="Dickens N.J."/>
            <person name="Letunic I."/>
            <person name="Suyama M."/>
            <person name="Torrents D."/>
            <person name="von Mering C."/>
            <person name="Zdobnov E.M."/>
            <person name="Makova K."/>
            <person name="Nekrutenko A."/>
            <person name="Elnitski L."/>
            <person name="Eswara P."/>
            <person name="King D.C."/>
            <person name="Yang S.-P."/>
            <person name="Tyekucheva S."/>
            <person name="Radakrishnan A."/>
            <person name="Harris R.S."/>
            <person name="Chiaromonte F."/>
            <person name="Taylor J."/>
            <person name="He J."/>
            <person name="Rijnkels M."/>
            <person name="Griffiths-Jones S."/>
            <person name="Ureta-Vidal A."/>
            <person name="Hoffman M.M."/>
            <person name="Severin J."/>
            <person name="Searle S.M.J."/>
            <person name="Law A.S."/>
            <person name="Speed D."/>
            <person name="Waddington D."/>
            <person name="Cheng Z."/>
            <person name="Tuzun E."/>
            <person name="Eichler E."/>
            <person name="Bao Z."/>
            <person name="Flicek P."/>
            <person name="Shteynberg D.D."/>
            <person name="Brent M.R."/>
            <person name="Bye J.M."/>
            <person name="Huckle E.J."/>
            <person name="Chatterji S."/>
            <person name="Dewey C."/>
            <person name="Pachter L."/>
            <person name="Kouranov A."/>
            <person name="Mourelatos Z."/>
            <person name="Hatzigeorgiou A.G."/>
            <person name="Paterson A.H."/>
            <person name="Ivarie R."/>
            <person name="Brandstrom M."/>
            <person name="Axelsson E."/>
            <person name="Backstrom N."/>
            <person name="Berlin S."/>
            <person name="Webster M.T."/>
            <person name="Pourquie O."/>
            <person name="Reymond A."/>
            <person name="Ucla C."/>
            <person name="Antonarakis S.E."/>
            <person name="Long M."/>
            <person name="Emerson J.J."/>
            <person name="Betran E."/>
            <person name="Dupanloup I."/>
            <person name="Kaessmann H."/>
            <person name="Hinrichs A.S."/>
            <person name="Bejerano G."/>
            <person name="Furey T.S."/>
            <person name="Harte R.A."/>
            <person name="Raney B."/>
            <person name="Siepel A."/>
            <person name="Kent W.J."/>
            <person name="Haussler D."/>
            <person name="Eyras E."/>
            <person name="Castelo R."/>
            <person name="Abril J.F."/>
            <person name="Castellano S."/>
            <person name="Camara F."/>
            <person name="Parra G."/>
            <person name="Guigo R."/>
            <person name="Bourque G."/>
            <person name="Tesler G."/>
            <person name="Pevzner P.A."/>
            <person name="Smit A."/>
            <person name="Fulton L.A."/>
            <person name="Mardis E.R."/>
            <person name="Wilson R.K."/>
        </authorList>
    </citation>
    <scope>NUCLEOTIDE SEQUENCE [LARGE SCALE GENOMIC DNA]</scope>
    <source>
        <strain>Red jungle fowl</strain>
    </source>
</reference>
<dbReference type="EMBL" id="AADN02030847">
    <property type="status" value="NOT_ANNOTATED_CDS"/>
    <property type="molecule type" value="Genomic_DNA"/>
</dbReference>
<dbReference type="RefSeq" id="XP_001234168.2">
    <property type="nucleotide sequence ID" value="XM_001234167.4"/>
</dbReference>
<dbReference type="SMR" id="E1BXS0"/>
<dbReference type="FunCoup" id="E1BXS0">
    <property type="interactions" value="1199"/>
</dbReference>
<dbReference type="STRING" id="9031.ENSGALP00000072976"/>
<dbReference type="PaxDb" id="9031-ENSGALP00000013642"/>
<dbReference type="GeneID" id="770846"/>
<dbReference type="CTD" id="119392"/>
<dbReference type="VEuPathDB" id="HostDB:geneid_770846"/>
<dbReference type="eggNOG" id="ENOG502S1QX">
    <property type="taxonomic scope" value="Eukaryota"/>
</dbReference>
<dbReference type="HOGENOM" id="CLU_075586_1_0_1"/>
<dbReference type="InParanoid" id="E1BXS0"/>
<dbReference type="OrthoDB" id="10051617at2759"/>
<dbReference type="PhylomeDB" id="E1BXS0"/>
<dbReference type="TreeFam" id="TF332725"/>
<dbReference type="PRO" id="PR:E1BXS0"/>
<dbReference type="Proteomes" id="UP000000539">
    <property type="component" value="Chromosome 6"/>
</dbReference>
<dbReference type="Bgee" id="ENSGALG00000052088">
    <property type="expression patterns" value="Expressed in spermatid and 11 other cell types or tissues"/>
</dbReference>
<dbReference type="GO" id="GO:0005634">
    <property type="term" value="C:nucleus"/>
    <property type="evidence" value="ECO:0000250"/>
    <property type="project" value="UniProtKB"/>
</dbReference>
<dbReference type="GO" id="GO:0032798">
    <property type="term" value="C:Swi5-Sfr1 complex"/>
    <property type="evidence" value="ECO:0000250"/>
    <property type="project" value="UniProtKB"/>
</dbReference>
<dbReference type="GO" id="GO:0003713">
    <property type="term" value="F:transcription coactivator activity"/>
    <property type="evidence" value="ECO:0000318"/>
    <property type="project" value="GO_Central"/>
</dbReference>
<dbReference type="GO" id="GO:0000724">
    <property type="term" value="P:double-strand break repair via homologous recombination"/>
    <property type="evidence" value="ECO:0000250"/>
    <property type="project" value="UniProtKB"/>
</dbReference>
<dbReference type="GO" id="GO:0045893">
    <property type="term" value="P:positive regulation of DNA-templated transcription"/>
    <property type="evidence" value="ECO:0000318"/>
    <property type="project" value="GO_Central"/>
</dbReference>
<dbReference type="InterPro" id="IPR042429">
    <property type="entry name" value="SFR1"/>
</dbReference>
<dbReference type="InterPro" id="IPR018468">
    <property type="entry name" value="SFR1/Mei5"/>
</dbReference>
<dbReference type="PANTHER" id="PTHR28643">
    <property type="entry name" value="SWI5-DEPENDENT RECOMBINATION DNA REPAIR PROTEIN 1 HOMOLOG"/>
    <property type="match status" value="1"/>
</dbReference>
<dbReference type="PANTHER" id="PTHR28643:SF1">
    <property type="entry name" value="SWI5-DEPENDENT RECOMBINATION DNA REPAIR PROTEIN 1 HOMOLOG"/>
    <property type="match status" value="1"/>
</dbReference>
<dbReference type="Pfam" id="PF10376">
    <property type="entry name" value="Mei5"/>
    <property type="match status" value="1"/>
</dbReference>
<sequence>MEEAACGKLTSLCHTPKDSGTAAPQRTSSGKQPMSATLRERLRKTRRSFTTNFAVAKRLKVDTEEKDCTDVDNRCLPKIGMDCSTLQDGSECLEQNCTVNTYFKSPLQENNLCESAENVVRVDLGQQQSLGEKVRLMKQVKEKEELLRRLKLVKMYRSKNNLSELQALIVKWRSSTQLMLYELQAAFSADGKKVSLSQLIDTFGLEDHLLHYSRAEEDFVDT</sequence>
<evidence type="ECO:0000250" key="1">
    <source>
        <dbReference type="UniProtKB" id="Q86XK3"/>
    </source>
</evidence>
<evidence type="ECO:0000250" key="2">
    <source>
        <dbReference type="UniProtKB" id="Q8BP27"/>
    </source>
</evidence>
<evidence type="ECO:0000255" key="3"/>
<evidence type="ECO:0000256" key="4">
    <source>
        <dbReference type="SAM" id="MobiDB-lite"/>
    </source>
</evidence>
<evidence type="ECO:0000305" key="5"/>
<accession>E1BXS0</accession>
<name>SFR1_CHICK</name>
<keyword id="KW-0175">Coiled coil</keyword>
<keyword id="KW-0227">DNA damage</keyword>
<keyword id="KW-0234">DNA repair</keyword>
<keyword id="KW-0539">Nucleus</keyword>
<keyword id="KW-1185">Reference proteome</keyword>
<keyword id="KW-0804">Transcription</keyword>
<keyword id="KW-0805">Transcription regulation</keyword>
<proteinExistence type="inferred from homology"/>
<comment type="function">
    <text evidence="1">Component of the SWI5-SFR1 complex, a complex required for double-strand break repair via homologous recombination (By similarity). May act as a transcriptional modulator for ESR1 (By similarity).</text>
</comment>
<comment type="subunit">
    <text evidence="1">Component of the swi5-sfr1 complex.</text>
</comment>
<comment type="subcellular location">
    <subcellularLocation>
        <location evidence="2">Nucleus</location>
    </subcellularLocation>
</comment>
<comment type="similarity">
    <text evidence="5">Belongs to the SFR1/MEI5 family.</text>
</comment>
<organism>
    <name type="scientific">Gallus gallus</name>
    <name type="common">Chicken</name>
    <dbReference type="NCBI Taxonomy" id="9031"/>
    <lineage>
        <taxon>Eukaryota</taxon>
        <taxon>Metazoa</taxon>
        <taxon>Chordata</taxon>
        <taxon>Craniata</taxon>
        <taxon>Vertebrata</taxon>
        <taxon>Euteleostomi</taxon>
        <taxon>Archelosauria</taxon>
        <taxon>Archosauria</taxon>
        <taxon>Dinosauria</taxon>
        <taxon>Saurischia</taxon>
        <taxon>Theropoda</taxon>
        <taxon>Coelurosauria</taxon>
        <taxon>Aves</taxon>
        <taxon>Neognathae</taxon>
        <taxon>Galloanserae</taxon>
        <taxon>Galliformes</taxon>
        <taxon>Phasianidae</taxon>
        <taxon>Phasianinae</taxon>
        <taxon>Gallus</taxon>
    </lineage>
</organism>
<feature type="chain" id="PRO_0000406976" description="Swi5-dependent recombination DNA repair protein 1 homolog">
    <location>
        <begin position="1"/>
        <end position="222"/>
    </location>
</feature>
<feature type="region of interest" description="Disordered" evidence="4">
    <location>
        <begin position="16"/>
        <end position="36"/>
    </location>
</feature>
<feature type="coiled-coil region" evidence="3">
    <location>
        <begin position="130"/>
        <end position="155"/>
    </location>
</feature>
<feature type="compositionally biased region" description="Polar residues" evidence="4">
    <location>
        <begin position="22"/>
        <end position="35"/>
    </location>
</feature>
<gene>
    <name type="primary">SFR1</name>
    <name type="synonym">MEI5</name>
    <name type="synonym">MEIR5</name>
</gene>